<organism>
    <name type="scientific">Buchnera aphidicola subsp. Baizongia pistaciae (strain Bp)</name>
    <dbReference type="NCBI Taxonomy" id="224915"/>
    <lineage>
        <taxon>Bacteria</taxon>
        <taxon>Pseudomonadati</taxon>
        <taxon>Pseudomonadota</taxon>
        <taxon>Gammaproteobacteria</taxon>
        <taxon>Enterobacterales</taxon>
        <taxon>Erwiniaceae</taxon>
        <taxon>Buchnera</taxon>
    </lineage>
</organism>
<reference key="1">
    <citation type="journal article" date="2003" name="Proc. Natl. Acad. Sci. U.S.A.">
        <title>Reductive genome evolution in Buchnera aphidicola.</title>
        <authorList>
            <person name="van Ham R.C.H.J."/>
            <person name="Kamerbeek J."/>
            <person name="Palacios C."/>
            <person name="Rausell C."/>
            <person name="Abascal F."/>
            <person name="Bastolla U."/>
            <person name="Fernandez J.M."/>
            <person name="Jimenez L."/>
            <person name="Postigo M."/>
            <person name="Silva F.J."/>
            <person name="Tamames J."/>
            <person name="Viguera E."/>
            <person name="Latorre A."/>
            <person name="Valencia A."/>
            <person name="Moran F."/>
            <person name="Moya A."/>
        </authorList>
    </citation>
    <scope>NUCLEOTIDE SEQUENCE [LARGE SCALE GENOMIC DNA]</scope>
    <source>
        <strain>Bp</strain>
    </source>
</reference>
<comment type="subcellular location">
    <subcellularLocation>
        <location evidence="2">Cell membrane</location>
        <topology evidence="2">Multi-pass membrane protein</topology>
    </subcellularLocation>
</comment>
<comment type="similarity">
    <text evidence="2">To E.coli CvpA.</text>
</comment>
<gene>
    <name type="primary">cvpA</name>
    <name type="ordered locus">bbp_158</name>
</gene>
<name>CVPA_BUCBP</name>
<evidence type="ECO:0000255" key="1"/>
<evidence type="ECO:0000305" key="2"/>
<protein>
    <recommendedName>
        <fullName>Colicin V production protein homolog</fullName>
    </recommendedName>
</protein>
<proteinExistence type="predicted"/>
<keyword id="KW-1003">Cell membrane</keyword>
<keyword id="KW-0472">Membrane</keyword>
<keyword id="KW-1185">Reference proteome</keyword>
<keyword id="KW-0812">Transmembrane</keyword>
<keyword id="KW-1133">Transmembrane helix</keyword>
<accession>Q89AT1</accession>
<sequence length="161" mass="19290">MNVIDCISIIVIIISAVISFFRGFLQELSSIFIWIVGVCVFFRYYSFFSIFSTYVRNIFLKNIISYIVFFVFFLFFKSIFDYCIIIFIEKCGISLINKIFGMFFGIIRGVLFLCIVLFFLELLTNFAYNKYFKNSFFVPYFNCFIKVVIKYLFKKYILFKS</sequence>
<feature type="chain" id="PRO_0000079580" description="Colicin V production protein homolog">
    <location>
        <begin position="1"/>
        <end position="161"/>
    </location>
</feature>
<feature type="transmembrane region" description="Helical" evidence="1">
    <location>
        <begin position="7"/>
        <end position="26"/>
    </location>
</feature>
<feature type="transmembrane region" description="Helical" evidence="1">
    <location>
        <begin position="31"/>
        <end position="53"/>
    </location>
</feature>
<feature type="transmembrane region" description="Helical" evidence="1">
    <location>
        <begin position="66"/>
        <end position="88"/>
    </location>
</feature>
<feature type="transmembrane region" description="Helical" evidence="1">
    <location>
        <begin position="101"/>
        <end position="123"/>
    </location>
</feature>
<feature type="transmembrane region" description="Helical" evidence="1">
    <location>
        <begin position="136"/>
        <end position="153"/>
    </location>
</feature>
<dbReference type="EMBL" id="AE016826">
    <property type="protein sequence ID" value="AAO26892.1"/>
    <property type="molecule type" value="Genomic_DNA"/>
</dbReference>
<dbReference type="STRING" id="224915.bbp_158"/>
<dbReference type="KEGG" id="bab:bbp_158"/>
<dbReference type="eggNOG" id="COG1286">
    <property type="taxonomic scope" value="Bacteria"/>
</dbReference>
<dbReference type="HOGENOM" id="CLU_092720_2_1_6"/>
<dbReference type="OrthoDB" id="9810601at2"/>
<dbReference type="Proteomes" id="UP000000601">
    <property type="component" value="Chromosome"/>
</dbReference>
<dbReference type="GO" id="GO:0005886">
    <property type="term" value="C:plasma membrane"/>
    <property type="evidence" value="ECO:0007669"/>
    <property type="project" value="UniProtKB-SubCell"/>
</dbReference>
<dbReference type="GO" id="GO:0009403">
    <property type="term" value="P:toxin biosynthetic process"/>
    <property type="evidence" value="ECO:0007669"/>
    <property type="project" value="InterPro"/>
</dbReference>
<dbReference type="InterPro" id="IPR003825">
    <property type="entry name" value="Colicin-V_CvpA"/>
</dbReference>
<dbReference type="InterPro" id="IPR052719">
    <property type="entry name" value="CvpA-like"/>
</dbReference>
<dbReference type="PANTHER" id="PTHR36926">
    <property type="entry name" value="COLICIN V PRODUCTION PROTEIN"/>
    <property type="match status" value="1"/>
</dbReference>
<dbReference type="PANTHER" id="PTHR36926:SF1">
    <property type="entry name" value="COLICIN V PRODUCTION PROTEIN"/>
    <property type="match status" value="1"/>
</dbReference>
<dbReference type="Pfam" id="PF02674">
    <property type="entry name" value="Colicin_V"/>
    <property type="match status" value="1"/>
</dbReference>